<dbReference type="EC" id="4.2.1.126" evidence="1"/>
<dbReference type="EMBL" id="BA000032">
    <property type="protein sequence ID" value="BAC63086.1"/>
    <property type="molecule type" value="Genomic_DNA"/>
</dbReference>
<dbReference type="RefSeq" id="NP_801253.1">
    <property type="nucleotide sequence ID" value="NC_004605.1"/>
</dbReference>
<dbReference type="SMR" id="Q87FD6"/>
<dbReference type="GeneID" id="1192439"/>
<dbReference type="KEGG" id="vpa:VPA1743"/>
<dbReference type="PATRIC" id="fig|223926.6.peg.4657"/>
<dbReference type="eggNOG" id="COG2103">
    <property type="taxonomic scope" value="Bacteria"/>
</dbReference>
<dbReference type="HOGENOM" id="CLU_049049_1_1_6"/>
<dbReference type="UniPathway" id="UPA00342"/>
<dbReference type="UniPathway" id="UPA00343"/>
<dbReference type="UniPathway" id="UPA00544"/>
<dbReference type="Proteomes" id="UP000002493">
    <property type="component" value="Chromosome 2"/>
</dbReference>
<dbReference type="GO" id="GO:0097367">
    <property type="term" value="F:carbohydrate derivative binding"/>
    <property type="evidence" value="ECO:0007669"/>
    <property type="project" value="InterPro"/>
</dbReference>
<dbReference type="GO" id="GO:0016835">
    <property type="term" value="F:carbon-oxygen lyase activity"/>
    <property type="evidence" value="ECO:0007669"/>
    <property type="project" value="UniProtKB-UniRule"/>
</dbReference>
<dbReference type="GO" id="GO:0016803">
    <property type="term" value="F:ether hydrolase activity"/>
    <property type="evidence" value="ECO:0007669"/>
    <property type="project" value="TreeGrafter"/>
</dbReference>
<dbReference type="GO" id="GO:0097175">
    <property type="term" value="P:1,6-anhydro-N-acetyl-beta-muramic acid catabolic process"/>
    <property type="evidence" value="ECO:0007669"/>
    <property type="project" value="UniProtKB-UniRule"/>
</dbReference>
<dbReference type="GO" id="GO:0046348">
    <property type="term" value="P:amino sugar catabolic process"/>
    <property type="evidence" value="ECO:0007669"/>
    <property type="project" value="InterPro"/>
</dbReference>
<dbReference type="GO" id="GO:0097173">
    <property type="term" value="P:N-acetylmuramic acid catabolic process"/>
    <property type="evidence" value="ECO:0007669"/>
    <property type="project" value="UniProtKB-UniPathway"/>
</dbReference>
<dbReference type="GO" id="GO:0009254">
    <property type="term" value="P:peptidoglycan turnover"/>
    <property type="evidence" value="ECO:0007669"/>
    <property type="project" value="UniProtKB-UniRule"/>
</dbReference>
<dbReference type="CDD" id="cd05007">
    <property type="entry name" value="SIS_Etherase"/>
    <property type="match status" value="1"/>
</dbReference>
<dbReference type="FunFam" id="1.10.8.1080:FF:000001">
    <property type="entry name" value="N-acetylmuramic acid 6-phosphate etherase"/>
    <property type="match status" value="1"/>
</dbReference>
<dbReference type="FunFam" id="3.40.50.10490:FF:000014">
    <property type="entry name" value="N-acetylmuramic acid 6-phosphate etherase"/>
    <property type="match status" value="1"/>
</dbReference>
<dbReference type="Gene3D" id="1.10.8.1080">
    <property type="match status" value="1"/>
</dbReference>
<dbReference type="Gene3D" id="3.40.50.10490">
    <property type="entry name" value="Glucose-6-phosphate isomerase like protein, domain 1"/>
    <property type="match status" value="1"/>
</dbReference>
<dbReference type="HAMAP" id="MF_00068">
    <property type="entry name" value="MurQ"/>
    <property type="match status" value="1"/>
</dbReference>
<dbReference type="InterPro" id="IPR005488">
    <property type="entry name" value="Etherase_MurQ"/>
</dbReference>
<dbReference type="InterPro" id="IPR005486">
    <property type="entry name" value="Glucokinase_regulatory_CS"/>
</dbReference>
<dbReference type="InterPro" id="IPR040190">
    <property type="entry name" value="MURQ/GCKR"/>
</dbReference>
<dbReference type="InterPro" id="IPR001347">
    <property type="entry name" value="SIS_dom"/>
</dbReference>
<dbReference type="InterPro" id="IPR046348">
    <property type="entry name" value="SIS_dom_sf"/>
</dbReference>
<dbReference type="NCBIfam" id="TIGR00274">
    <property type="entry name" value="N-acetylmuramic acid 6-phosphate etherase"/>
    <property type="match status" value="1"/>
</dbReference>
<dbReference type="NCBIfam" id="NF003915">
    <property type="entry name" value="PRK05441.1"/>
    <property type="match status" value="1"/>
</dbReference>
<dbReference type="NCBIfam" id="NF009222">
    <property type="entry name" value="PRK12570.1"/>
    <property type="match status" value="1"/>
</dbReference>
<dbReference type="PANTHER" id="PTHR10088">
    <property type="entry name" value="GLUCOKINASE REGULATORY PROTEIN"/>
    <property type="match status" value="1"/>
</dbReference>
<dbReference type="PANTHER" id="PTHR10088:SF4">
    <property type="entry name" value="GLUCOKINASE REGULATORY PROTEIN"/>
    <property type="match status" value="1"/>
</dbReference>
<dbReference type="Pfam" id="PF22645">
    <property type="entry name" value="GKRP_SIS_N"/>
    <property type="match status" value="1"/>
</dbReference>
<dbReference type="SUPFAM" id="SSF53697">
    <property type="entry name" value="SIS domain"/>
    <property type="match status" value="1"/>
</dbReference>
<dbReference type="PROSITE" id="PS01272">
    <property type="entry name" value="GCKR"/>
    <property type="match status" value="1"/>
</dbReference>
<dbReference type="PROSITE" id="PS51464">
    <property type="entry name" value="SIS"/>
    <property type="match status" value="1"/>
</dbReference>
<sequence>MKIDLSRLVTESRNPASTEIDTLSTIEMLQVINEEDQKVALAVKAVLPQIAKTVNAITAAFANGGRLVYMGAGTSGRLGILDASECPPTYGTHPDMVIGLIAGGHQAILKAVENAEDDVKMGQDDLKALHLTKHDVVVGIAASGRTPYVLGGLEYAKSIGATTASIACNPECAMAKAADIAILPIVGAEVVTGSSRMKAGTAQKLVLNMLTTGAMIRSGKVFGNLMVDVEATNAKLIQRQTNIVVEATGASKEEAERALNACDRHCKTAILMILADLDAEQAKSRLAAHNGFIRAALNNN</sequence>
<proteinExistence type="inferred from homology"/>
<reference key="1">
    <citation type="journal article" date="2003" name="Lancet">
        <title>Genome sequence of Vibrio parahaemolyticus: a pathogenic mechanism distinct from that of V. cholerae.</title>
        <authorList>
            <person name="Makino K."/>
            <person name="Oshima K."/>
            <person name="Kurokawa K."/>
            <person name="Yokoyama K."/>
            <person name="Uda T."/>
            <person name="Tagomori K."/>
            <person name="Iijima Y."/>
            <person name="Najima M."/>
            <person name="Nakano M."/>
            <person name="Yamashita A."/>
            <person name="Kubota Y."/>
            <person name="Kimura S."/>
            <person name="Yasunaga T."/>
            <person name="Honda T."/>
            <person name="Shinagawa H."/>
            <person name="Hattori M."/>
            <person name="Iida T."/>
        </authorList>
    </citation>
    <scope>NUCLEOTIDE SEQUENCE [LARGE SCALE GENOMIC DNA]</scope>
    <source>
        <strain>RIMD 2210633</strain>
    </source>
</reference>
<feature type="chain" id="PRO_0000214844" description="N-acetylmuramic acid 6-phosphate etherase 2">
    <location>
        <begin position="1"/>
        <end position="300"/>
    </location>
</feature>
<feature type="domain" description="SIS" evidence="1">
    <location>
        <begin position="57"/>
        <end position="220"/>
    </location>
</feature>
<feature type="active site" description="Proton donor" evidence="1">
    <location>
        <position position="85"/>
    </location>
</feature>
<feature type="active site" evidence="1">
    <location>
        <position position="116"/>
    </location>
</feature>
<protein>
    <recommendedName>
        <fullName evidence="1">N-acetylmuramic acid 6-phosphate etherase 2</fullName>
        <shortName evidence="1">MurNAc-6-P etherase 2</shortName>
        <ecNumber evidence="1">4.2.1.126</ecNumber>
    </recommendedName>
    <alternativeName>
        <fullName evidence="1">N-acetylmuramic acid 6-phosphate hydrolase 2</fullName>
    </alternativeName>
    <alternativeName>
        <fullName evidence="1">N-acetylmuramic acid 6-phosphate lyase 2</fullName>
    </alternativeName>
</protein>
<organism>
    <name type="scientific">Vibrio parahaemolyticus serotype O3:K6 (strain RIMD 2210633)</name>
    <dbReference type="NCBI Taxonomy" id="223926"/>
    <lineage>
        <taxon>Bacteria</taxon>
        <taxon>Pseudomonadati</taxon>
        <taxon>Pseudomonadota</taxon>
        <taxon>Gammaproteobacteria</taxon>
        <taxon>Vibrionales</taxon>
        <taxon>Vibrionaceae</taxon>
        <taxon>Vibrio</taxon>
    </lineage>
</organism>
<keyword id="KW-0119">Carbohydrate metabolism</keyword>
<keyword id="KW-0456">Lyase</keyword>
<evidence type="ECO:0000255" key="1">
    <source>
        <dbReference type="HAMAP-Rule" id="MF_00068"/>
    </source>
</evidence>
<comment type="function">
    <text evidence="1">Specifically catalyzes the cleavage of the D-lactyl ether substituent of MurNAc 6-phosphate, producing GlcNAc 6-phosphate and D-lactate. Together with AnmK, is also required for the utilization of anhydro-N-acetylmuramic acid (anhMurNAc) either imported from the medium or derived from its own cell wall murein, and thus plays a role in cell wall recycling.</text>
</comment>
<comment type="catalytic activity">
    <reaction evidence="1">
        <text>N-acetyl-D-muramate 6-phosphate + H2O = N-acetyl-D-glucosamine 6-phosphate + (R)-lactate</text>
        <dbReference type="Rhea" id="RHEA:26410"/>
        <dbReference type="ChEBI" id="CHEBI:15377"/>
        <dbReference type="ChEBI" id="CHEBI:16004"/>
        <dbReference type="ChEBI" id="CHEBI:57513"/>
        <dbReference type="ChEBI" id="CHEBI:58722"/>
        <dbReference type="EC" id="4.2.1.126"/>
    </reaction>
</comment>
<comment type="pathway">
    <text evidence="1">Amino-sugar metabolism; 1,6-anhydro-N-acetylmuramate degradation.</text>
</comment>
<comment type="pathway">
    <text evidence="1">Amino-sugar metabolism; N-acetylmuramate degradation.</text>
</comment>
<comment type="pathway">
    <text evidence="1">Cell wall biogenesis; peptidoglycan recycling.</text>
</comment>
<comment type="subunit">
    <text evidence="1">Homodimer.</text>
</comment>
<comment type="miscellaneous">
    <text evidence="1">A lyase-type mechanism (elimination/hydration) is suggested for the cleavage of the lactyl ether bond of MurNAc 6-phosphate, with the formation of an alpha,beta-unsaturated aldehyde intermediate with (E)-stereochemistry, followed by the syn addition of water to give product.</text>
</comment>
<comment type="similarity">
    <text evidence="1">Belongs to the GCKR-like family. MurNAc-6-P etherase subfamily.</text>
</comment>
<gene>
    <name evidence="1" type="primary">murQ2</name>
    <name type="ordered locus">VPA1743</name>
</gene>
<name>MURQ2_VIBPA</name>
<accession>Q87FD6</accession>